<organism>
    <name type="scientific">Mus musculus</name>
    <name type="common">Mouse</name>
    <dbReference type="NCBI Taxonomy" id="10090"/>
    <lineage>
        <taxon>Eukaryota</taxon>
        <taxon>Metazoa</taxon>
        <taxon>Chordata</taxon>
        <taxon>Craniata</taxon>
        <taxon>Vertebrata</taxon>
        <taxon>Euteleostomi</taxon>
        <taxon>Mammalia</taxon>
        <taxon>Eutheria</taxon>
        <taxon>Euarchontoglires</taxon>
        <taxon>Glires</taxon>
        <taxon>Rodentia</taxon>
        <taxon>Myomorpha</taxon>
        <taxon>Muroidea</taxon>
        <taxon>Muridae</taxon>
        <taxon>Murinae</taxon>
        <taxon>Mus</taxon>
        <taxon>Mus</taxon>
    </lineage>
</organism>
<dbReference type="EMBL" id="AC123075">
    <property type="status" value="NOT_ANNOTATED_CDS"/>
    <property type="molecule type" value="Genomic_DNA"/>
</dbReference>
<dbReference type="EMBL" id="BC052878">
    <property type="protein sequence ID" value="AAH52878.1"/>
    <property type="molecule type" value="mRNA"/>
</dbReference>
<dbReference type="EMBL" id="AK135919">
    <property type="protein sequence ID" value="BAE22724.1"/>
    <property type="molecule type" value="mRNA"/>
</dbReference>
<dbReference type="EMBL" id="AK136097">
    <property type="protein sequence ID" value="BAE22818.1"/>
    <property type="molecule type" value="mRNA"/>
</dbReference>
<dbReference type="EMBL" id="AK136102">
    <property type="protein sequence ID" value="BAE22822.1"/>
    <property type="molecule type" value="mRNA"/>
</dbReference>
<dbReference type="EMBL" id="AK163414">
    <property type="protein sequence ID" value="BAE37339.1"/>
    <property type="molecule type" value="mRNA"/>
</dbReference>
<dbReference type="CCDS" id="CCDS38673.1"/>
<dbReference type="RefSeq" id="NP_955759.2">
    <property type="nucleotide sequence ID" value="NM_199465.4"/>
</dbReference>
<dbReference type="RefSeq" id="XP_006502061.1">
    <property type="nucleotide sequence ID" value="XM_006501998.5"/>
</dbReference>
<dbReference type="SMR" id="Q7TPW1"/>
<dbReference type="BioGRID" id="213062">
    <property type="interactions" value="3"/>
</dbReference>
<dbReference type="FunCoup" id="Q7TPW1">
    <property type="interactions" value="129"/>
</dbReference>
<dbReference type="IntAct" id="Q7TPW1">
    <property type="interactions" value="1"/>
</dbReference>
<dbReference type="MINT" id="Q7TPW1"/>
<dbReference type="STRING" id="10090.ENSMUSP00000037120"/>
<dbReference type="GlyGen" id="Q7TPW1">
    <property type="glycosylation" value="1 site, 1 O-linked glycan (1 site)"/>
</dbReference>
<dbReference type="iPTMnet" id="Q7TPW1"/>
<dbReference type="PhosphoSitePlus" id="Q7TPW1"/>
<dbReference type="jPOST" id="Q7TPW1"/>
<dbReference type="PaxDb" id="10090-ENSMUSP00000037120"/>
<dbReference type="ProteomicsDB" id="287487"/>
<dbReference type="Pumba" id="Q7TPW1"/>
<dbReference type="Antibodypedia" id="2776">
    <property type="antibodies" value="73 antibodies from 17 providers"/>
</dbReference>
<dbReference type="DNASU" id="68810"/>
<dbReference type="Ensembl" id="ENSMUST00000046045.13">
    <property type="protein sequence ID" value="ENSMUSP00000037120.9"/>
    <property type="gene ID" value="ENSMUSG00000039103.13"/>
</dbReference>
<dbReference type="GeneID" id="68810"/>
<dbReference type="KEGG" id="mmu:68810"/>
<dbReference type="UCSC" id="uc008rtb.2">
    <property type="organism name" value="mouse"/>
</dbReference>
<dbReference type="AGR" id="MGI:1916060"/>
<dbReference type="CTD" id="91624"/>
<dbReference type="MGI" id="MGI:1916060">
    <property type="gene designation" value="Nexn"/>
</dbReference>
<dbReference type="VEuPathDB" id="HostDB:ENSMUSG00000039103"/>
<dbReference type="eggNOG" id="ENOG502QU7W">
    <property type="taxonomic scope" value="Eukaryota"/>
</dbReference>
<dbReference type="GeneTree" id="ENSGT00730000111176"/>
<dbReference type="InParanoid" id="Q7TPW1"/>
<dbReference type="OrthoDB" id="8946843at2759"/>
<dbReference type="TreeFam" id="TF328960"/>
<dbReference type="BioGRID-ORCS" id="68810">
    <property type="hits" value="4 hits in 76 CRISPR screens"/>
</dbReference>
<dbReference type="ChiTaRS" id="Nexn">
    <property type="organism name" value="mouse"/>
</dbReference>
<dbReference type="PRO" id="PR:Q7TPW1"/>
<dbReference type="Proteomes" id="UP000000589">
    <property type="component" value="Chromosome 3"/>
</dbReference>
<dbReference type="RNAct" id="Q7TPW1">
    <property type="molecule type" value="protein"/>
</dbReference>
<dbReference type="Bgee" id="ENSMUSG00000039103">
    <property type="expression patterns" value="Expressed in animal zygote and 177 other cell types or tissues"/>
</dbReference>
<dbReference type="ExpressionAtlas" id="Q7TPW1">
    <property type="expression patterns" value="baseline and differential"/>
</dbReference>
<dbReference type="GO" id="GO:0005912">
    <property type="term" value="C:adherens junction"/>
    <property type="evidence" value="ECO:0007669"/>
    <property type="project" value="UniProtKB-SubCell"/>
</dbReference>
<dbReference type="GO" id="GO:0005856">
    <property type="term" value="C:cytoskeleton"/>
    <property type="evidence" value="ECO:0007669"/>
    <property type="project" value="UniProtKB-SubCell"/>
</dbReference>
<dbReference type="GO" id="GO:0030018">
    <property type="term" value="C:Z disc"/>
    <property type="evidence" value="ECO:0000250"/>
    <property type="project" value="UniProtKB"/>
</dbReference>
<dbReference type="GO" id="GO:0003779">
    <property type="term" value="F:actin binding"/>
    <property type="evidence" value="ECO:0007669"/>
    <property type="project" value="UniProtKB-KW"/>
</dbReference>
<dbReference type="GO" id="GO:0008307">
    <property type="term" value="F:structural constituent of muscle"/>
    <property type="evidence" value="ECO:0000250"/>
    <property type="project" value="UniProtKB"/>
</dbReference>
<dbReference type="GO" id="GO:0030334">
    <property type="term" value="P:regulation of cell migration"/>
    <property type="evidence" value="ECO:0000250"/>
    <property type="project" value="UniProtKB"/>
</dbReference>
<dbReference type="GO" id="GO:0051493">
    <property type="term" value="P:regulation of cytoskeleton organization"/>
    <property type="evidence" value="ECO:0000250"/>
    <property type="project" value="UniProtKB"/>
</dbReference>
<dbReference type="GO" id="GO:0009617">
    <property type="term" value="P:response to bacterium"/>
    <property type="evidence" value="ECO:0000270"/>
    <property type="project" value="MGI"/>
</dbReference>
<dbReference type="FunFam" id="2.60.40.10:FF:000164">
    <property type="entry name" value="nexilin isoform X1"/>
    <property type="match status" value="1"/>
</dbReference>
<dbReference type="Gene3D" id="2.60.40.10">
    <property type="entry name" value="Immunoglobulins"/>
    <property type="match status" value="1"/>
</dbReference>
<dbReference type="InterPro" id="IPR007110">
    <property type="entry name" value="Ig-like_dom"/>
</dbReference>
<dbReference type="InterPro" id="IPR036179">
    <property type="entry name" value="Ig-like_dom_sf"/>
</dbReference>
<dbReference type="InterPro" id="IPR013783">
    <property type="entry name" value="Ig-like_fold"/>
</dbReference>
<dbReference type="InterPro" id="IPR013098">
    <property type="entry name" value="Ig_I-set"/>
</dbReference>
<dbReference type="InterPro" id="IPR003599">
    <property type="entry name" value="Ig_sub"/>
</dbReference>
<dbReference type="PANTHER" id="PTHR21508">
    <property type="entry name" value="MITOGUARDIN"/>
    <property type="match status" value="1"/>
</dbReference>
<dbReference type="PANTHER" id="PTHR21508:SF4">
    <property type="entry name" value="MITOGUARDIN 2"/>
    <property type="match status" value="1"/>
</dbReference>
<dbReference type="Pfam" id="PF07679">
    <property type="entry name" value="I-set"/>
    <property type="match status" value="1"/>
</dbReference>
<dbReference type="SMART" id="SM00409">
    <property type="entry name" value="IG"/>
    <property type="match status" value="1"/>
</dbReference>
<dbReference type="SUPFAM" id="SSF48726">
    <property type="entry name" value="Immunoglobulin"/>
    <property type="match status" value="1"/>
</dbReference>
<dbReference type="PROSITE" id="PS50835">
    <property type="entry name" value="IG_LIKE"/>
    <property type="match status" value="1"/>
</dbReference>
<feature type="chain" id="PRO_0000302086" description="Nexilin">
    <location>
        <begin position="1"/>
        <end position="607"/>
    </location>
</feature>
<feature type="domain" description="Ig-like" evidence="4">
    <location>
        <begin position="513"/>
        <end position="601"/>
    </location>
</feature>
<feature type="region of interest" description="Disordered" evidence="5">
    <location>
        <begin position="1"/>
        <end position="143"/>
    </location>
</feature>
<feature type="region of interest" description="Disordered" evidence="5">
    <location>
        <begin position="165"/>
        <end position="268"/>
    </location>
</feature>
<feature type="region of interest" description="Disordered" evidence="5">
    <location>
        <begin position="419"/>
        <end position="444"/>
    </location>
</feature>
<feature type="region of interest" description="Disordered" evidence="5">
    <location>
        <begin position="480"/>
        <end position="514"/>
    </location>
</feature>
<feature type="compositionally biased region" description="Basic and acidic residues" evidence="5">
    <location>
        <begin position="1"/>
        <end position="14"/>
    </location>
</feature>
<feature type="compositionally biased region" description="Basic and acidic residues" evidence="5">
    <location>
        <begin position="40"/>
        <end position="85"/>
    </location>
</feature>
<feature type="compositionally biased region" description="Basic and acidic residues" evidence="5">
    <location>
        <begin position="120"/>
        <end position="143"/>
    </location>
</feature>
<feature type="compositionally biased region" description="Basic and acidic residues" evidence="5">
    <location>
        <begin position="167"/>
        <end position="221"/>
    </location>
</feature>
<feature type="compositionally biased region" description="Basic and acidic residues" evidence="5">
    <location>
        <begin position="228"/>
        <end position="268"/>
    </location>
</feature>
<feature type="modified residue" description="Phosphoserine" evidence="10">
    <location>
        <position position="16"/>
    </location>
</feature>
<feature type="modified residue" description="Phosphoserine" evidence="2">
    <location>
        <position position="172"/>
    </location>
</feature>
<feature type="modified residue" description="Phosphoserine" evidence="10">
    <location>
        <position position="281"/>
    </location>
</feature>
<feature type="modified residue" description="Phosphoserine" evidence="10">
    <location>
        <position position="288"/>
    </location>
</feature>
<feature type="modified residue" description="Phosphoserine" evidence="2">
    <location>
        <position position="296"/>
    </location>
</feature>
<feature type="modified residue" description="Phosphothreonine" evidence="2">
    <location>
        <position position="301"/>
    </location>
</feature>
<feature type="modified residue" description="Phosphoserine" evidence="10">
    <location>
        <position position="495"/>
    </location>
</feature>
<feature type="modified residue" description="Phosphoserine" evidence="3">
    <location>
        <position position="500"/>
    </location>
</feature>
<feature type="modified residue" description="Phosphothreonine" evidence="3">
    <location>
        <position position="502"/>
    </location>
</feature>
<feature type="sequence conflict" description="In Ref. 2; AAH52878." evidence="6" ref="2">
    <original>D</original>
    <variation>N</variation>
    <location>
        <position position="123"/>
    </location>
</feature>
<feature type="sequence conflict" description="In Ref. 2; AAH52878." evidence="6" ref="2">
    <original>I</original>
    <variation>L</variation>
    <location>
        <position position="268"/>
    </location>
</feature>
<feature type="sequence conflict" description="In Ref. 2; AAH52878." evidence="6" ref="2">
    <original>A</original>
    <variation>T</variation>
    <location>
        <position position="454"/>
    </location>
</feature>
<gene>
    <name evidence="9" type="primary">Nexn</name>
</gene>
<evidence type="ECO:0000250" key="1"/>
<evidence type="ECO:0000250" key="2">
    <source>
        <dbReference type="UniProtKB" id="Q0ZGT2"/>
    </source>
</evidence>
<evidence type="ECO:0000250" key="3">
    <source>
        <dbReference type="UniProtKB" id="Q9Z2J4"/>
    </source>
</evidence>
<evidence type="ECO:0000255" key="4"/>
<evidence type="ECO:0000256" key="5">
    <source>
        <dbReference type="SAM" id="MobiDB-lite"/>
    </source>
</evidence>
<evidence type="ECO:0000305" key="6"/>
<evidence type="ECO:0000312" key="7">
    <source>
        <dbReference type="EMBL" id="AAH52878.1"/>
    </source>
</evidence>
<evidence type="ECO:0000312" key="8">
    <source>
        <dbReference type="EMBL" id="BAE22822.1"/>
    </source>
</evidence>
<evidence type="ECO:0000312" key="9">
    <source>
        <dbReference type="MGI" id="MGI:1916060"/>
    </source>
</evidence>
<evidence type="ECO:0007744" key="10">
    <source>
    </source>
</evidence>
<comment type="function">
    <text evidence="1">Involved in regulating cell migration through association with the actin cytoskeleton. Has an essential role in the maintenance of Z line and sarcomere integrity.</text>
</comment>
<comment type="subunit">
    <text evidence="2">Interacts with F-actin.</text>
</comment>
<comment type="subcellular location">
    <subcellularLocation>
        <location evidence="2 3">Cytoplasm</location>
        <location evidence="2 3">Cytoskeleton</location>
    </subcellularLocation>
    <subcellularLocation>
        <location evidence="2 3">Cell junction</location>
        <location evidence="2 3">Adherens junction</location>
    </subcellularLocation>
    <subcellularLocation>
        <location evidence="3">Cytoplasm</location>
        <location evidence="3">Myofibril</location>
        <location evidence="3">Sarcomere</location>
        <location evidence="3">Z line</location>
    </subcellularLocation>
    <text evidence="2 3">Localizes to the cell-matrix AJ. Not found at the cell-cell AJ.</text>
</comment>
<accession>Q7TPW1</accession>
<accession>E9QJX5</accession>
<accession>Q3TQP3</accession>
<accession>Q3UWU2</accession>
<accession>Q3UWU6</accession>
<accession>Q3UX39</accession>
<reference key="1">
    <citation type="journal article" date="2009" name="PLoS Biol.">
        <title>Lineage-specific biology revealed by a finished genome assembly of the mouse.</title>
        <authorList>
            <person name="Church D.M."/>
            <person name="Goodstadt L."/>
            <person name="Hillier L.W."/>
            <person name="Zody M.C."/>
            <person name="Goldstein S."/>
            <person name="She X."/>
            <person name="Bult C.J."/>
            <person name="Agarwala R."/>
            <person name="Cherry J.L."/>
            <person name="DiCuccio M."/>
            <person name="Hlavina W."/>
            <person name="Kapustin Y."/>
            <person name="Meric P."/>
            <person name="Maglott D."/>
            <person name="Birtle Z."/>
            <person name="Marques A.C."/>
            <person name="Graves T."/>
            <person name="Zhou S."/>
            <person name="Teague B."/>
            <person name="Potamousis K."/>
            <person name="Churas C."/>
            <person name="Place M."/>
            <person name="Herschleb J."/>
            <person name="Runnheim R."/>
            <person name="Forrest D."/>
            <person name="Amos-Landgraf J."/>
            <person name="Schwartz D.C."/>
            <person name="Cheng Z."/>
            <person name="Lindblad-Toh K."/>
            <person name="Eichler E.E."/>
            <person name="Ponting C.P."/>
        </authorList>
    </citation>
    <scope>NUCLEOTIDE SEQUENCE [LARGE SCALE GENOMIC DNA]</scope>
    <source>
        <strain>C57BL/6J</strain>
    </source>
</reference>
<reference evidence="7" key="2">
    <citation type="journal article" date="2004" name="Genome Res.">
        <title>The status, quality, and expansion of the NIH full-length cDNA project: the Mammalian Gene Collection (MGC).</title>
        <authorList>
            <consortium name="The MGC Project Team"/>
        </authorList>
    </citation>
    <scope>NUCLEOTIDE SEQUENCE [LARGE SCALE MRNA]</scope>
    <source>
        <strain evidence="7">C57BL/6J</strain>
        <tissue evidence="7">Egg</tissue>
    </source>
</reference>
<reference evidence="6 8" key="3">
    <citation type="journal article" date="2005" name="Science">
        <title>The transcriptional landscape of the mammalian genome.</title>
        <authorList>
            <person name="Carninci P."/>
            <person name="Kasukawa T."/>
            <person name="Katayama S."/>
            <person name="Gough J."/>
            <person name="Frith M.C."/>
            <person name="Maeda N."/>
            <person name="Oyama R."/>
            <person name="Ravasi T."/>
            <person name="Lenhard B."/>
            <person name="Wells C."/>
            <person name="Kodzius R."/>
            <person name="Shimokawa K."/>
            <person name="Bajic V.B."/>
            <person name="Brenner S.E."/>
            <person name="Batalov S."/>
            <person name="Forrest A.R."/>
            <person name="Zavolan M."/>
            <person name="Davis M.J."/>
            <person name="Wilming L.G."/>
            <person name="Aidinis V."/>
            <person name="Allen J.E."/>
            <person name="Ambesi-Impiombato A."/>
            <person name="Apweiler R."/>
            <person name="Aturaliya R.N."/>
            <person name="Bailey T.L."/>
            <person name="Bansal M."/>
            <person name="Baxter L."/>
            <person name="Beisel K.W."/>
            <person name="Bersano T."/>
            <person name="Bono H."/>
            <person name="Chalk A.M."/>
            <person name="Chiu K.P."/>
            <person name="Choudhary V."/>
            <person name="Christoffels A."/>
            <person name="Clutterbuck D.R."/>
            <person name="Crowe M.L."/>
            <person name="Dalla E."/>
            <person name="Dalrymple B.P."/>
            <person name="de Bono B."/>
            <person name="Della Gatta G."/>
            <person name="di Bernardo D."/>
            <person name="Down T."/>
            <person name="Engstrom P."/>
            <person name="Fagiolini M."/>
            <person name="Faulkner G."/>
            <person name="Fletcher C.F."/>
            <person name="Fukushima T."/>
            <person name="Furuno M."/>
            <person name="Futaki S."/>
            <person name="Gariboldi M."/>
            <person name="Georgii-Hemming P."/>
            <person name="Gingeras T.R."/>
            <person name="Gojobori T."/>
            <person name="Green R.E."/>
            <person name="Gustincich S."/>
            <person name="Harbers M."/>
            <person name="Hayashi Y."/>
            <person name="Hensch T.K."/>
            <person name="Hirokawa N."/>
            <person name="Hill D."/>
            <person name="Huminiecki L."/>
            <person name="Iacono M."/>
            <person name="Ikeo K."/>
            <person name="Iwama A."/>
            <person name="Ishikawa T."/>
            <person name="Jakt M."/>
            <person name="Kanapin A."/>
            <person name="Katoh M."/>
            <person name="Kawasawa Y."/>
            <person name="Kelso J."/>
            <person name="Kitamura H."/>
            <person name="Kitano H."/>
            <person name="Kollias G."/>
            <person name="Krishnan S.P."/>
            <person name="Kruger A."/>
            <person name="Kummerfeld S.K."/>
            <person name="Kurochkin I.V."/>
            <person name="Lareau L.F."/>
            <person name="Lazarevic D."/>
            <person name="Lipovich L."/>
            <person name="Liu J."/>
            <person name="Liuni S."/>
            <person name="McWilliam S."/>
            <person name="Madan Babu M."/>
            <person name="Madera M."/>
            <person name="Marchionni L."/>
            <person name="Matsuda H."/>
            <person name="Matsuzawa S."/>
            <person name="Miki H."/>
            <person name="Mignone F."/>
            <person name="Miyake S."/>
            <person name="Morris K."/>
            <person name="Mottagui-Tabar S."/>
            <person name="Mulder N."/>
            <person name="Nakano N."/>
            <person name="Nakauchi H."/>
            <person name="Ng P."/>
            <person name="Nilsson R."/>
            <person name="Nishiguchi S."/>
            <person name="Nishikawa S."/>
            <person name="Nori F."/>
            <person name="Ohara O."/>
            <person name="Okazaki Y."/>
            <person name="Orlando V."/>
            <person name="Pang K.C."/>
            <person name="Pavan W.J."/>
            <person name="Pavesi G."/>
            <person name="Pesole G."/>
            <person name="Petrovsky N."/>
            <person name="Piazza S."/>
            <person name="Reed J."/>
            <person name="Reid J.F."/>
            <person name="Ring B.Z."/>
            <person name="Ringwald M."/>
            <person name="Rost B."/>
            <person name="Ruan Y."/>
            <person name="Salzberg S.L."/>
            <person name="Sandelin A."/>
            <person name="Schneider C."/>
            <person name="Schoenbach C."/>
            <person name="Sekiguchi K."/>
            <person name="Semple C.A."/>
            <person name="Seno S."/>
            <person name="Sessa L."/>
            <person name="Sheng Y."/>
            <person name="Shibata Y."/>
            <person name="Shimada H."/>
            <person name="Shimada K."/>
            <person name="Silva D."/>
            <person name="Sinclair B."/>
            <person name="Sperling S."/>
            <person name="Stupka E."/>
            <person name="Sugiura K."/>
            <person name="Sultana R."/>
            <person name="Takenaka Y."/>
            <person name="Taki K."/>
            <person name="Tammoja K."/>
            <person name="Tan S.L."/>
            <person name="Tang S."/>
            <person name="Taylor M.S."/>
            <person name="Tegner J."/>
            <person name="Teichmann S.A."/>
            <person name="Ueda H.R."/>
            <person name="van Nimwegen E."/>
            <person name="Verardo R."/>
            <person name="Wei C.L."/>
            <person name="Yagi K."/>
            <person name="Yamanishi H."/>
            <person name="Zabarovsky E."/>
            <person name="Zhu S."/>
            <person name="Zimmer A."/>
            <person name="Hide W."/>
            <person name="Bult C."/>
            <person name="Grimmond S.M."/>
            <person name="Teasdale R.D."/>
            <person name="Liu E.T."/>
            <person name="Brusic V."/>
            <person name="Quackenbush J."/>
            <person name="Wahlestedt C."/>
            <person name="Mattick J.S."/>
            <person name="Hume D.A."/>
            <person name="Kai C."/>
            <person name="Sasaki D."/>
            <person name="Tomaru Y."/>
            <person name="Fukuda S."/>
            <person name="Kanamori-Katayama M."/>
            <person name="Suzuki M."/>
            <person name="Aoki J."/>
            <person name="Arakawa T."/>
            <person name="Iida J."/>
            <person name="Imamura K."/>
            <person name="Itoh M."/>
            <person name="Kato T."/>
            <person name="Kawaji H."/>
            <person name="Kawagashira N."/>
            <person name="Kawashima T."/>
            <person name="Kojima M."/>
            <person name="Kondo S."/>
            <person name="Konno H."/>
            <person name="Nakano K."/>
            <person name="Ninomiya N."/>
            <person name="Nishio T."/>
            <person name="Okada M."/>
            <person name="Plessy C."/>
            <person name="Shibata K."/>
            <person name="Shiraki T."/>
            <person name="Suzuki S."/>
            <person name="Tagami M."/>
            <person name="Waki K."/>
            <person name="Watahiki A."/>
            <person name="Okamura-Oho Y."/>
            <person name="Suzuki H."/>
            <person name="Kawai J."/>
            <person name="Hayashizaki Y."/>
        </authorList>
    </citation>
    <scope>NUCLEOTIDE SEQUENCE [LARGE SCALE MRNA] OF 1-314 AND 386-607</scope>
    <source>
        <strain evidence="8">C57BL/6J</strain>
        <tissue evidence="8">Egg</tissue>
    </source>
</reference>
<reference key="4">
    <citation type="journal article" date="2010" name="Cell">
        <title>A tissue-specific atlas of mouse protein phosphorylation and expression.</title>
        <authorList>
            <person name="Huttlin E.L."/>
            <person name="Jedrychowski M.P."/>
            <person name="Elias J.E."/>
            <person name="Goswami T."/>
            <person name="Rad R."/>
            <person name="Beausoleil S.A."/>
            <person name="Villen J."/>
            <person name="Haas W."/>
            <person name="Sowa M.E."/>
            <person name="Gygi S.P."/>
        </authorList>
    </citation>
    <scope>PHOSPHORYLATION [LARGE SCALE ANALYSIS] AT SER-16; SER-281; SER-288 AND SER-495</scope>
    <scope>IDENTIFICATION BY MASS SPECTROMETRY [LARGE SCALE ANALYSIS]</scope>
    <source>
        <tissue>Brain</tissue>
        <tissue>Brown adipose tissue</tissue>
        <tissue>Heart</tissue>
        <tissue>Kidney</tissue>
        <tissue>Lung</tissue>
        <tissue>Spleen</tissue>
        <tissue>Testis</tissue>
    </source>
</reference>
<name>NEXN_MOUSE</name>
<keyword id="KW-0009">Actin-binding</keyword>
<keyword id="KW-0965">Cell junction</keyword>
<keyword id="KW-0963">Cytoplasm</keyword>
<keyword id="KW-0206">Cytoskeleton</keyword>
<keyword id="KW-0393">Immunoglobulin domain</keyword>
<keyword id="KW-0597">Phosphoprotein</keyword>
<keyword id="KW-1185">Reference proteome</keyword>
<proteinExistence type="evidence at protein level"/>
<protein>
    <recommendedName>
        <fullName>Nexilin</fullName>
    </recommendedName>
    <alternativeName>
        <fullName>F-actin-binding protein</fullName>
    </alternativeName>
</protein>
<sequence length="607" mass="72108">MNDVSQKAEIKEMLASDDEEESSPKIEKAYVPKLTGTVKGKFDEMEKHRQEEQRKRTEEERKRRIEQDLLEKRKIQRELAKRAEQIEDINNTGTESASEEGDDSLLITVVPAKSYKTPGKTKDPEDLDREEGNGRTNHEEDKMRYEEECRVLKEAKCLSLVMDDETEAKKESHFPGKLKSTFEELERQRQENRKKQAEEEARRRLEEERRSFEEARRHMVNEEDENQDRETVFKEYRPGKLKLSFEEIERQRREDEKRKAEEEARRRIEEEKAAFAEARRSMVLDDDSPEIYKTVSQESLTPGKLEINFEQLLRQKMEEERRRTEEERRHKLEMEKQEFEQLRQEMGKEEEENESFGLSREYEELIKLKRSGSIQAKNLKSKFEKIGQLSEKEVQKKIEEERAKRRAIDLEIKEREAENFHEDDDVDVRPAKKSESPFTHKVNMKARFEQMAKAREEEEQRRIEEQKLLRMQFEQKEIDAALQKKREDEEEEEGSIVNGSTTEDEEQTRSGAPWFKKPLRNTSVVDSEPVRFTVKVTGEPKPEITWWFEGEILQDGEDYQYIERGETYCLYLPETFPEDGGEYMCKAVNNKGSAASTCILTIEMDDY</sequence>